<feature type="chain" id="PRO_0000101636" description="Ribosomal RNA small subunit methyltransferase A">
    <location>
        <begin position="1"/>
        <end position="271"/>
    </location>
</feature>
<feature type="binding site" evidence="1">
    <location>
        <position position="18"/>
    </location>
    <ligand>
        <name>S-adenosyl-L-methionine</name>
        <dbReference type="ChEBI" id="CHEBI:59789"/>
    </ligand>
</feature>
<feature type="binding site" evidence="1">
    <location>
        <position position="20"/>
    </location>
    <ligand>
        <name>S-adenosyl-L-methionine</name>
        <dbReference type="ChEBI" id="CHEBI:59789"/>
    </ligand>
</feature>
<feature type="binding site" evidence="1">
    <location>
        <position position="45"/>
    </location>
    <ligand>
        <name>S-adenosyl-L-methionine</name>
        <dbReference type="ChEBI" id="CHEBI:59789"/>
    </ligand>
</feature>
<feature type="binding site" evidence="1">
    <location>
        <position position="66"/>
    </location>
    <ligand>
        <name>S-adenosyl-L-methionine</name>
        <dbReference type="ChEBI" id="CHEBI:59789"/>
    </ligand>
</feature>
<feature type="binding site" evidence="1">
    <location>
        <position position="91"/>
    </location>
    <ligand>
        <name>S-adenosyl-L-methionine</name>
        <dbReference type="ChEBI" id="CHEBI:59789"/>
    </ligand>
</feature>
<feature type="binding site" evidence="1">
    <location>
        <position position="112"/>
    </location>
    <ligand>
        <name>S-adenosyl-L-methionine</name>
        <dbReference type="ChEBI" id="CHEBI:59789"/>
    </ligand>
</feature>
<reference key="1">
    <citation type="journal article" date="2000" name="Nature">
        <title>DNA sequence of both chromosomes of the cholera pathogen Vibrio cholerae.</title>
        <authorList>
            <person name="Heidelberg J.F."/>
            <person name="Eisen J.A."/>
            <person name="Nelson W.C."/>
            <person name="Clayton R.A."/>
            <person name="Gwinn M.L."/>
            <person name="Dodson R.J."/>
            <person name="Haft D.H."/>
            <person name="Hickey E.K."/>
            <person name="Peterson J.D."/>
            <person name="Umayam L.A."/>
            <person name="Gill S.R."/>
            <person name="Nelson K.E."/>
            <person name="Read T.D."/>
            <person name="Tettelin H."/>
            <person name="Richardson D.L."/>
            <person name="Ermolaeva M.D."/>
            <person name="Vamathevan J.J."/>
            <person name="Bass S."/>
            <person name="Qin H."/>
            <person name="Dragoi I."/>
            <person name="Sellers P."/>
            <person name="McDonald L.A."/>
            <person name="Utterback T.R."/>
            <person name="Fleischmann R.D."/>
            <person name="Nierman W.C."/>
            <person name="White O."/>
            <person name="Salzberg S.L."/>
            <person name="Smith H.O."/>
            <person name="Colwell R.R."/>
            <person name="Mekalanos J.J."/>
            <person name="Venter J.C."/>
            <person name="Fraser C.M."/>
        </authorList>
    </citation>
    <scope>NUCLEOTIDE SEQUENCE [LARGE SCALE GENOMIC DNA]</scope>
    <source>
        <strain>ATCC 39315 / El Tor Inaba N16961</strain>
    </source>
</reference>
<gene>
    <name evidence="1" type="primary">rsmA</name>
    <name evidence="1" type="synonym">ksgA</name>
    <name type="ordered locus">VC_0443</name>
</gene>
<name>RSMA_VIBCH</name>
<protein>
    <recommendedName>
        <fullName evidence="1">Ribosomal RNA small subunit methyltransferase A</fullName>
        <ecNumber evidence="1">2.1.1.182</ecNumber>
    </recommendedName>
    <alternativeName>
        <fullName evidence="1">16S rRNA (adenine(1518)-N(6)/adenine(1519)-N(6))-dimethyltransferase</fullName>
    </alternativeName>
    <alternativeName>
        <fullName evidence="1">16S rRNA dimethyladenosine transferase</fullName>
    </alternativeName>
    <alternativeName>
        <fullName evidence="1">16S rRNA dimethylase</fullName>
    </alternativeName>
    <alternativeName>
        <fullName evidence="1">S-adenosylmethionine-6-N', N'-adenosyl(rRNA) dimethyltransferase</fullName>
    </alternativeName>
</protein>
<keyword id="KW-0963">Cytoplasm</keyword>
<keyword id="KW-0489">Methyltransferase</keyword>
<keyword id="KW-1185">Reference proteome</keyword>
<keyword id="KW-0694">RNA-binding</keyword>
<keyword id="KW-0698">rRNA processing</keyword>
<keyword id="KW-0949">S-adenosyl-L-methionine</keyword>
<keyword id="KW-0808">Transferase</keyword>
<comment type="function">
    <text evidence="1">Specifically dimethylates two adjacent adenosines (A1518 and A1519) in the loop of a conserved hairpin near the 3'-end of 16S rRNA in the 30S particle. May play a critical role in biogenesis of 30S subunits.</text>
</comment>
<comment type="catalytic activity">
    <reaction evidence="1">
        <text>adenosine(1518)/adenosine(1519) in 16S rRNA + 4 S-adenosyl-L-methionine = N(6)-dimethyladenosine(1518)/N(6)-dimethyladenosine(1519) in 16S rRNA + 4 S-adenosyl-L-homocysteine + 4 H(+)</text>
        <dbReference type="Rhea" id="RHEA:19609"/>
        <dbReference type="Rhea" id="RHEA-COMP:10232"/>
        <dbReference type="Rhea" id="RHEA-COMP:10233"/>
        <dbReference type="ChEBI" id="CHEBI:15378"/>
        <dbReference type="ChEBI" id="CHEBI:57856"/>
        <dbReference type="ChEBI" id="CHEBI:59789"/>
        <dbReference type="ChEBI" id="CHEBI:74411"/>
        <dbReference type="ChEBI" id="CHEBI:74493"/>
        <dbReference type="EC" id="2.1.1.182"/>
    </reaction>
</comment>
<comment type="subcellular location">
    <subcellularLocation>
        <location evidence="1">Cytoplasm</location>
    </subcellularLocation>
</comment>
<comment type="similarity">
    <text evidence="1">Belongs to the class I-like SAM-binding methyltransferase superfamily. rRNA adenine N(6)-methyltransferase family. RsmA subfamily.</text>
</comment>
<comment type="sequence caution" evidence="2">
    <conflict type="erroneous initiation">
        <sequence resource="EMBL-CDS" id="AAF93616"/>
    </conflict>
</comment>
<dbReference type="EC" id="2.1.1.182" evidence="1"/>
<dbReference type="EMBL" id="AE003852">
    <property type="protein sequence ID" value="AAF93616.1"/>
    <property type="status" value="ALT_INIT"/>
    <property type="molecule type" value="Genomic_DNA"/>
</dbReference>
<dbReference type="PIR" id="B82323">
    <property type="entry name" value="B82323"/>
</dbReference>
<dbReference type="RefSeq" id="NP_230097.1">
    <property type="nucleotide sequence ID" value="NC_002505.1"/>
</dbReference>
<dbReference type="RefSeq" id="WP_001243262.1">
    <property type="nucleotide sequence ID" value="NZ_LT906614.1"/>
</dbReference>
<dbReference type="SMR" id="Q9KUS2"/>
<dbReference type="STRING" id="243277.VC_0443"/>
<dbReference type="DNASU" id="2615775"/>
<dbReference type="EnsemblBacteria" id="AAF93616">
    <property type="protein sequence ID" value="AAF93616"/>
    <property type="gene ID" value="VC_0443"/>
</dbReference>
<dbReference type="KEGG" id="vch:VC_0443"/>
<dbReference type="PATRIC" id="fig|243277.26.peg.417"/>
<dbReference type="eggNOG" id="COG0030">
    <property type="taxonomic scope" value="Bacteria"/>
</dbReference>
<dbReference type="HOGENOM" id="CLU_041220_0_1_6"/>
<dbReference type="Proteomes" id="UP000000584">
    <property type="component" value="Chromosome 1"/>
</dbReference>
<dbReference type="GO" id="GO:0005829">
    <property type="term" value="C:cytosol"/>
    <property type="evidence" value="ECO:0000318"/>
    <property type="project" value="GO_Central"/>
</dbReference>
<dbReference type="GO" id="GO:0052908">
    <property type="term" value="F:16S rRNA (adenine(1518)-N(6)/adenine(1519)-N(6))-dimethyltransferase activity"/>
    <property type="evidence" value="ECO:0007669"/>
    <property type="project" value="UniProtKB-EC"/>
</dbReference>
<dbReference type="GO" id="GO:0003723">
    <property type="term" value="F:RNA binding"/>
    <property type="evidence" value="ECO:0007669"/>
    <property type="project" value="UniProtKB-KW"/>
</dbReference>
<dbReference type="GO" id="GO:0000179">
    <property type="term" value="F:rRNA (adenine-N6,N6-)-dimethyltransferase activity"/>
    <property type="evidence" value="ECO:0000318"/>
    <property type="project" value="GO_Central"/>
</dbReference>
<dbReference type="GO" id="GO:0031167">
    <property type="term" value="P:rRNA methylation"/>
    <property type="evidence" value="ECO:0000318"/>
    <property type="project" value="GO_Central"/>
</dbReference>
<dbReference type="FunFam" id="1.10.8.100:FF:000001">
    <property type="entry name" value="Ribosomal RNA small subunit methyltransferase A"/>
    <property type="match status" value="1"/>
</dbReference>
<dbReference type="FunFam" id="3.40.50.150:FF:000006">
    <property type="entry name" value="Ribosomal RNA small subunit methyltransferase A"/>
    <property type="match status" value="1"/>
</dbReference>
<dbReference type="Gene3D" id="1.10.8.100">
    <property type="entry name" value="Ribosomal RNA adenine dimethylase-like, domain 2"/>
    <property type="match status" value="1"/>
</dbReference>
<dbReference type="Gene3D" id="3.40.50.150">
    <property type="entry name" value="Vaccinia Virus protein VP39"/>
    <property type="match status" value="1"/>
</dbReference>
<dbReference type="HAMAP" id="MF_00607">
    <property type="entry name" value="16SrRNA_methyltr_A"/>
    <property type="match status" value="1"/>
</dbReference>
<dbReference type="InterPro" id="IPR001737">
    <property type="entry name" value="KsgA/Erm"/>
</dbReference>
<dbReference type="InterPro" id="IPR023165">
    <property type="entry name" value="rRNA_Ade_diMease-like_C"/>
</dbReference>
<dbReference type="InterPro" id="IPR020596">
    <property type="entry name" value="rRNA_Ade_Mease_Trfase_CS"/>
</dbReference>
<dbReference type="InterPro" id="IPR020598">
    <property type="entry name" value="rRNA_Ade_methylase_Trfase_N"/>
</dbReference>
<dbReference type="InterPro" id="IPR011530">
    <property type="entry name" value="rRNA_adenine_dimethylase"/>
</dbReference>
<dbReference type="InterPro" id="IPR029063">
    <property type="entry name" value="SAM-dependent_MTases_sf"/>
</dbReference>
<dbReference type="NCBIfam" id="TIGR00755">
    <property type="entry name" value="ksgA"/>
    <property type="match status" value="1"/>
</dbReference>
<dbReference type="PANTHER" id="PTHR11727">
    <property type="entry name" value="DIMETHYLADENOSINE TRANSFERASE"/>
    <property type="match status" value="1"/>
</dbReference>
<dbReference type="PANTHER" id="PTHR11727:SF7">
    <property type="entry name" value="DIMETHYLADENOSINE TRANSFERASE-RELATED"/>
    <property type="match status" value="1"/>
</dbReference>
<dbReference type="Pfam" id="PF00398">
    <property type="entry name" value="RrnaAD"/>
    <property type="match status" value="1"/>
</dbReference>
<dbReference type="SMART" id="SM00650">
    <property type="entry name" value="rADc"/>
    <property type="match status" value="1"/>
</dbReference>
<dbReference type="SUPFAM" id="SSF53335">
    <property type="entry name" value="S-adenosyl-L-methionine-dependent methyltransferases"/>
    <property type="match status" value="1"/>
</dbReference>
<dbReference type="PROSITE" id="PS01131">
    <property type="entry name" value="RRNA_A_DIMETH"/>
    <property type="match status" value="1"/>
</dbReference>
<dbReference type="PROSITE" id="PS51689">
    <property type="entry name" value="SAM_RNA_A_N6_MT"/>
    <property type="match status" value="1"/>
</dbReference>
<proteinExistence type="inferred from homology"/>
<sequence length="271" mass="30688">MRNDVHLGHKARKRFGQNFLNDPYIIDGIVSAINPKPGQNLVEIGPGLGAITEPVGREVDKFTVIELDRDLAERLRNHPELASKLTIHEGDAMRFDFKQLVKPNNKLRVFGNLPYNISTPLMFHLFEFHRDIQDMHFMLQKEVVNRLAAGPGTKAYGRLTVMAQYYCKVVPVLEVPPSAFVPPPKVDSAVVRLVPYEDLPHPATSLEWLDRVVREGFNQRRKTVRNCYKGLAEPETLETLGINPGMRPENLTLAQFVALANWLDATHKTHA</sequence>
<evidence type="ECO:0000255" key="1">
    <source>
        <dbReference type="HAMAP-Rule" id="MF_00607"/>
    </source>
</evidence>
<evidence type="ECO:0000305" key="2"/>
<organism>
    <name type="scientific">Vibrio cholerae serotype O1 (strain ATCC 39315 / El Tor Inaba N16961)</name>
    <dbReference type="NCBI Taxonomy" id="243277"/>
    <lineage>
        <taxon>Bacteria</taxon>
        <taxon>Pseudomonadati</taxon>
        <taxon>Pseudomonadota</taxon>
        <taxon>Gammaproteobacteria</taxon>
        <taxon>Vibrionales</taxon>
        <taxon>Vibrionaceae</taxon>
        <taxon>Vibrio</taxon>
    </lineage>
</organism>
<accession>Q9KUS2</accession>